<gene>
    <name evidence="1" type="primary">trhO</name>
    <name type="ordered locus">SpyM3_0630</name>
</gene>
<organism>
    <name type="scientific">Streptococcus pyogenes serotype M3 (strain ATCC BAA-595 / MGAS315)</name>
    <dbReference type="NCBI Taxonomy" id="198466"/>
    <lineage>
        <taxon>Bacteria</taxon>
        <taxon>Bacillati</taxon>
        <taxon>Bacillota</taxon>
        <taxon>Bacilli</taxon>
        <taxon>Lactobacillales</taxon>
        <taxon>Streptococcaceae</taxon>
        <taxon>Streptococcus</taxon>
    </lineage>
</organism>
<feature type="chain" id="PRO_0000161526" description="tRNA uridine(34) hydroxylase">
    <location>
        <begin position="1"/>
        <end position="328"/>
    </location>
</feature>
<feature type="domain" description="Rhodanese" evidence="1">
    <location>
        <begin position="130"/>
        <end position="224"/>
    </location>
</feature>
<feature type="active site" description="Cysteine persulfide intermediate" evidence="1">
    <location>
        <position position="184"/>
    </location>
</feature>
<comment type="function">
    <text evidence="1">Catalyzes oxygen-dependent 5-hydroxyuridine (ho5U) modification at position 34 in tRNAs.</text>
</comment>
<comment type="catalytic activity">
    <reaction evidence="1">
        <text>uridine(34) in tRNA + AH2 + O2 = 5-hydroxyuridine(34) in tRNA + A + H2O</text>
        <dbReference type="Rhea" id="RHEA:64224"/>
        <dbReference type="Rhea" id="RHEA-COMP:11727"/>
        <dbReference type="Rhea" id="RHEA-COMP:13381"/>
        <dbReference type="ChEBI" id="CHEBI:13193"/>
        <dbReference type="ChEBI" id="CHEBI:15377"/>
        <dbReference type="ChEBI" id="CHEBI:15379"/>
        <dbReference type="ChEBI" id="CHEBI:17499"/>
        <dbReference type="ChEBI" id="CHEBI:65315"/>
        <dbReference type="ChEBI" id="CHEBI:136877"/>
    </reaction>
</comment>
<comment type="similarity">
    <text evidence="1">Belongs to the TrhO family.</text>
</comment>
<dbReference type="EC" id="1.14.-.-" evidence="1"/>
<dbReference type="EMBL" id="AE014074">
    <property type="protein sequence ID" value="AAM79237.1"/>
    <property type="molecule type" value="Genomic_DNA"/>
</dbReference>
<dbReference type="RefSeq" id="WP_011054391.1">
    <property type="nucleotide sequence ID" value="NC_004070.1"/>
</dbReference>
<dbReference type="SMR" id="P0DG90"/>
<dbReference type="KEGG" id="spg:SpyM3_0630"/>
<dbReference type="HOGENOM" id="CLU_038878_1_0_9"/>
<dbReference type="Proteomes" id="UP000000564">
    <property type="component" value="Chromosome"/>
</dbReference>
<dbReference type="GO" id="GO:0016705">
    <property type="term" value="F:oxidoreductase activity, acting on paired donors, with incorporation or reduction of molecular oxygen"/>
    <property type="evidence" value="ECO:0007669"/>
    <property type="project" value="UniProtKB-UniRule"/>
</dbReference>
<dbReference type="GO" id="GO:0006400">
    <property type="term" value="P:tRNA modification"/>
    <property type="evidence" value="ECO:0007669"/>
    <property type="project" value="UniProtKB-UniRule"/>
</dbReference>
<dbReference type="CDD" id="cd01518">
    <property type="entry name" value="RHOD_YceA"/>
    <property type="match status" value="1"/>
</dbReference>
<dbReference type="Gene3D" id="3.30.70.100">
    <property type="match status" value="1"/>
</dbReference>
<dbReference type="Gene3D" id="3.40.250.10">
    <property type="entry name" value="Rhodanese-like domain"/>
    <property type="match status" value="1"/>
</dbReference>
<dbReference type="HAMAP" id="MF_00469">
    <property type="entry name" value="TrhO"/>
    <property type="match status" value="1"/>
</dbReference>
<dbReference type="InterPro" id="IPR001763">
    <property type="entry name" value="Rhodanese-like_dom"/>
</dbReference>
<dbReference type="InterPro" id="IPR036873">
    <property type="entry name" value="Rhodanese-like_dom_sf"/>
</dbReference>
<dbReference type="InterPro" id="IPR022111">
    <property type="entry name" value="Rhodanese_C"/>
</dbReference>
<dbReference type="InterPro" id="IPR020936">
    <property type="entry name" value="TrhO"/>
</dbReference>
<dbReference type="InterPro" id="IPR040503">
    <property type="entry name" value="TRHO_N"/>
</dbReference>
<dbReference type="NCBIfam" id="NF001135">
    <property type="entry name" value="PRK00142.1-3"/>
    <property type="match status" value="1"/>
</dbReference>
<dbReference type="NCBIfam" id="NF001137">
    <property type="entry name" value="PRK00142.1-5"/>
    <property type="match status" value="1"/>
</dbReference>
<dbReference type="PANTHER" id="PTHR43268:SF3">
    <property type="entry name" value="RHODANESE-LIKE DOMAIN-CONTAINING PROTEIN 7-RELATED"/>
    <property type="match status" value="1"/>
</dbReference>
<dbReference type="PANTHER" id="PTHR43268">
    <property type="entry name" value="THIOSULFATE SULFURTRANSFERASE/RHODANESE-LIKE DOMAIN-CONTAINING PROTEIN 2"/>
    <property type="match status" value="1"/>
</dbReference>
<dbReference type="Pfam" id="PF00581">
    <property type="entry name" value="Rhodanese"/>
    <property type="match status" value="1"/>
</dbReference>
<dbReference type="Pfam" id="PF12368">
    <property type="entry name" value="Rhodanese_C"/>
    <property type="match status" value="1"/>
</dbReference>
<dbReference type="Pfam" id="PF17773">
    <property type="entry name" value="UPF0176_N"/>
    <property type="match status" value="1"/>
</dbReference>
<dbReference type="SMART" id="SM00450">
    <property type="entry name" value="RHOD"/>
    <property type="match status" value="1"/>
</dbReference>
<dbReference type="SUPFAM" id="SSF52821">
    <property type="entry name" value="Rhodanese/Cell cycle control phosphatase"/>
    <property type="match status" value="1"/>
</dbReference>
<dbReference type="PROSITE" id="PS50206">
    <property type="entry name" value="RHODANESE_3"/>
    <property type="match status" value="1"/>
</dbReference>
<sequence length="328" mass="38199">MSEKIRVLLYYKYVSIENAQEYAAKHLEFCKSIGLKGRILIADEGINGTVSGDYETTQKYMDWVHSDERFADLWFKIDEENQQAFRKMFVRYKKEIVHLGLEDNNFDSDINPLETTGEYLNPKQFKEALLDEDTVVLDTRNDYEYDLGHFRGAIRPDIRNFRELPQWVRDNKDKFMEKRVVVYCTGGVRCEKFSGWMVREGFKDVGQLHGGIATYGKDPEVQGELWDGAMYVFDDRISVPINHVNPTVVSKDYFDGTPCERYVNCANPFCNKQIFASEENETKYVRGCSPECRAHERNRYVQENGLSRQEWAERLEAIGESLPEFVGA</sequence>
<accession>P0DG90</accession>
<accession>Q8K7U2</accession>
<keyword id="KW-0560">Oxidoreductase</keyword>
<keyword id="KW-0819">tRNA processing</keyword>
<proteinExistence type="inferred from homology"/>
<evidence type="ECO:0000255" key="1">
    <source>
        <dbReference type="HAMAP-Rule" id="MF_00469"/>
    </source>
</evidence>
<reference key="1">
    <citation type="journal article" date="2002" name="Proc. Natl. Acad. Sci. U.S.A.">
        <title>Genome sequence of a serotype M3 strain of group A Streptococcus: phage-encoded toxins, the high-virulence phenotype, and clone emergence.</title>
        <authorList>
            <person name="Beres S.B."/>
            <person name="Sylva G.L."/>
            <person name="Barbian K.D."/>
            <person name="Lei B."/>
            <person name="Hoff J.S."/>
            <person name="Mammarella N.D."/>
            <person name="Liu M.-Y."/>
            <person name="Smoot J.C."/>
            <person name="Porcella S.F."/>
            <person name="Parkins L.D."/>
            <person name="Campbell D.S."/>
            <person name="Smith T.M."/>
            <person name="McCormick J.K."/>
            <person name="Leung D.Y.M."/>
            <person name="Schlievert P.M."/>
            <person name="Musser J.M."/>
        </authorList>
    </citation>
    <scope>NUCLEOTIDE SEQUENCE [LARGE SCALE GENOMIC DNA]</scope>
    <source>
        <strain>ATCC BAA-595 / MGAS315</strain>
    </source>
</reference>
<protein>
    <recommendedName>
        <fullName evidence="1">tRNA uridine(34) hydroxylase</fullName>
        <ecNumber evidence="1">1.14.-.-</ecNumber>
    </recommendedName>
    <alternativeName>
        <fullName evidence="1">tRNA hydroxylation protein O</fullName>
    </alternativeName>
</protein>
<name>TRHO_STRP3</name>